<protein>
    <recommendedName>
        <fullName evidence="6">Mu-conotoxin BuIIIA</fullName>
    </recommendedName>
</protein>
<name>CM3A_CONBU</name>
<reference key="1">
    <citation type="journal article" date="2009" name="Toxicon">
        <title>Pruning nature: biodiversity-derived discovery of novel sodium channel blocking conotoxins from Conus bullatus.</title>
        <authorList>
            <person name="Holford M."/>
            <person name="Zhang M.-M."/>
            <person name="Gowd K.H."/>
            <person name="Azam L."/>
            <person name="Green B.R."/>
            <person name="Watkins M."/>
            <person name="Ownby J.-P."/>
            <person name="Yoshikami D."/>
            <person name="Bulaj G."/>
            <person name="Olivera B.M."/>
        </authorList>
    </citation>
    <scope>NUCLEOTIDE SEQUENCE [MRNA]</scope>
    <scope>SYNTHESIS OF 52-74</scope>
    <scope>FUNCTION ON NAV1.4/SCN4A</scope>
    <scope>AMIDATION AT CYS-74</scope>
    <source>
        <tissue>Venom duct</tissue>
    </source>
</reference>
<reference key="2">
    <citation type="journal article" date="2011" name="Proc. Natl. Acad. Sci. U.S.A.">
        <title>mu-Conotoxins that differentially block sodium channels Nav1.1 through 1.8 identify those responsible for action potentials in sciatic nerve.</title>
        <authorList>
            <person name="Wilson M.J."/>
            <person name="Yoshikami D."/>
            <person name="Azam L."/>
            <person name="Gajewiak J."/>
            <person name="Olivera B.M."/>
            <person name="Bulaj G."/>
            <person name="Zhang M.M."/>
        </authorList>
    </citation>
    <scope>FUNCTION</scope>
    <scope>SYNTHESIS OF 52-74</scope>
</reference>
<proteinExistence type="evidence at protein level"/>
<feature type="signal peptide" evidence="2">
    <location>
        <begin position="1"/>
        <end position="22"/>
    </location>
</feature>
<feature type="propeptide" id="PRO_0000384431" evidence="7">
    <location>
        <begin position="23"/>
        <end position="51"/>
    </location>
</feature>
<feature type="peptide" id="PRO_0000384432" description="Mu-conotoxin BuIIIA" evidence="8">
    <location>
        <begin position="52"/>
        <end position="74"/>
    </location>
</feature>
<feature type="region of interest" description="Disordered" evidence="3">
    <location>
        <begin position="26"/>
        <end position="46"/>
    </location>
</feature>
<feature type="compositionally biased region" description="Basic and acidic residues" evidence="3">
    <location>
        <begin position="28"/>
        <end position="38"/>
    </location>
</feature>
<feature type="modified residue" description="Cysteine amide" evidence="8">
    <location>
        <position position="74"/>
    </location>
</feature>
<feature type="disulfide bond" evidence="1">
    <location>
        <begin position="56"/>
        <end position="67"/>
    </location>
</feature>
<feature type="disulfide bond" evidence="1">
    <location>
        <begin position="57"/>
        <end position="73"/>
    </location>
</feature>
<feature type="disulfide bond" evidence="1">
    <location>
        <begin position="63"/>
        <end position="74"/>
    </location>
</feature>
<accession>C1J5M5</accession>
<evidence type="ECO:0000250" key="1">
    <source>
        <dbReference type="UniProtKB" id="C1J5M6"/>
    </source>
</evidence>
<evidence type="ECO:0000255" key="2"/>
<evidence type="ECO:0000256" key="3">
    <source>
        <dbReference type="SAM" id="MobiDB-lite"/>
    </source>
</evidence>
<evidence type="ECO:0000269" key="4">
    <source>
    </source>
</evidence>
<evidence type="ECO:0000269" key="5">
    <source>
    </source>
</evidence>
<evidence type="ECO:0000303" key="6">
    <source>
    </source>
</evidence>
<evidence type="ECO:0000305" key="7"/>
<evidence type="ECO:0000305" key="8">
    <source>
    </source>
</evidence>
<evidence type="ECO:0000305" key="9">
    <source>
    </source>
</evidence>
<comment type="function">
    <text evidence="4 5">Mu-conotoxins block voltage-gated sodium channels (Nav). This synthetic toxin potently blocks rNav1.2/SCN2A, and rNav1.4/SCN4A. It also moderately blocks rNav1.1/SCN1A, rNav1.3/SCN3A, rNav1.5/SCN5A, and mNav1.6/SCN8A. The inhibition is reversible.</text>
</comment>
<comment type="subcellular location">
    <subcellularLocation>
        <location evidence="8">Secreted</location>
    </subcellularLocation>
</comment>
<comment type="tissue specificity">
    <text evidence="8">Expressed by the venom duct.</text>
</comment>
<comment type="domain">
    <text evidence="7">The cysteine framework is III (CC-C-C-CC). Classified in the M-5 branch, since 5 residues stand between the fourth and the fifth cysteine residues.</text>
</comment>
<comment type="miscellaneous">
    <text evidence="9">Negative results: does not block rNav1.7/SCN9A, and rNav1.8/SCN10A.</text>
</comment>
<comment type="similarity">
    <text evidence="7">Belongs to the conotoxin M superfamily.</text>
</comment>
<dbReference type="EMBL" id="FJ240165">
    <property type="protein sequence ID" value="ACO50770.1"/>
    <property type="molecule type" value="mRNA"/>
</dbReference>
<dbReference type="ConoServer" id="3716">
    <property type="toxin name" value="BuIIIA precursor"/>
</dbReference>
<dbReference type="GO" id="GO:0005576">
    <property type="term" value="C:extracellular region"/>
    <property type="evidence" value="ECO:0007669"/>
    <property type="project" value="UniProtKB-SubCell"/>
</dbReference>
<dbReference type="GO" id="GO:0008200">
    <property type="term" value="F:ion channel inhibitor activity"/>
    <property type="evidence" value="ECO:0007669"/>
    <property type="project" value="InterPro"/>
</dbReference>
<dbReference type="GO" id="GO:0017080">
    <property type="term" value="F:sodium channel regulator activity"/>
    <property type="evidence" value="ECO:0007669"/>
    <property type="project" value="UniProtKB-KW"/>
</dbReference>
<dbReference type="GO" id="GO:0090729">
    <property type="term" value="F:toxin activity"/>
    <property type="evidence" value="ECO:0007669"/>
    <property type="project" value="UniProtKB-KW"/>
</dbReference>
<dbReference type="InterPro" id="IPR004214">
    <property type="entry name" value="Conotoxin"/>
</dbReference>
<dbReference type="Pfam" id="PF02950">
    <property type="entry name" value="Conotoxin"/>
    <property type="match status" value="1"/>
</dbReference>
<sequence>MMSKLGVLLTICLLLFPLFALPQDGDQPADRPAERMQDDISSEQNSLLEKRVTDRCCKGKRECGRWCRDHSRCCGRR</sequence>
<keyword id="KW-0027">Amidation</keyword>
<keyword id="KW-0165">Cleavage on pair of basic residues</keyword>
<keyword id="KW-1015">Disulfide bond</keyword>
<keyword id="KW-0872">Ion channel impairing toxin</keyword>
<keyword id="KW-0528">Neurotoxin</keyword>
<keyword id="KW-0964">Secreted</keyword>
<keyword id="KW-0732">Signal</keyword>
<keyword id="KW-0800">Toxin</keyword>
<keyword id="KW-0738">Voltage-gated sodium channel impairing toxin</keyword>
<organism>
    <name type="scientific">Conus bullatus</name>
    <name type="common">Bubble cone</name>
    <dbReference type="NCBI Taxonomy" id="89438"/>
    <lineage>
        <taxon>Eukaryota</taxon>
        <taxon>Metazoa</taxon>
        <taxon>Spiralia</taxon>
        <taxon>Lophotrochozoa</taxon>
        <taxon>Mollusca</taxon>
        <taxon>Gastropoda</taxon>
        <taxon>Caenogastropoda</taxon>
        <taxon>Neogastropoda</taxon>
        <taxon>Conoidea</taxon>
        <taxon>Conidae</taxon>
        <taxon>Conus</taxon>
        <taxon>Textilia</taxon>
    </lineage>
</organism>